<protein>
    <recommendedName>
        <fullName>H-2 class I histocompatibility antigen, K-W28 alpha chain</fullName>
    </recommendedName>
</protein>
<accession>P03991</accession>
<accession>P03990</accession>
<feature type="signal peptide" evidence="1">
    <location>
        <begin position="1"/>
        <end position="21"/>
    </location>
</feature>
<feature type="chain" id="PRO_0000018931" description="H-2 class I histocompatibility antigen, K-W28 alpha chain">
    <location>
        <begin position="22"/>
        <end position="368"/>
    </location>
</feature>
<feature type="topological domain" description="Extracellular" evidence="3">
    <location>
        <begin position="22"/>
        <end position="305"/>
    </location>
</feature>
<feature type="transmembrane region" description="Helical" evidence="3">
    <location>
        <begin position="306"/>
        <end position="329"/>
    </location>
</feature>
<feature type="topological domain" description="Cytoplasmic" evidence="3">
    <location>
        <begin position="330"/>
        <end position="368"/>
    </location>
</feature>
<feature type="domain" description="Ig-like C1-type">
    <location>
        <begin position="206"/>
        <end position="292"/>
    </location>
</feature>
<feature type="region of interest" description="Alpha-1">
    <location>
        <begin position="22"/>
        <end position="111"/>
    </location>
</feature>
<feature type="region of interest" description="Alpha-2">
    <location>
        <begin position="112"/>
        <end position="203"/>
    </location>
</feature>
<feature type="region of interest" description="Alpha-3">
    <location>
        <begin position="204"/>
        <end position="295"/>
    </location>
</feature>
<feature type="region of interest" description="Connecting peptide">
    <location>
        <begin position="296"/>
        <end position="305"/>
    </location>
</feature>
<feature type="modified residue" description="Phosphoserine" evidence="2">
    <location>
        <position position="350"/>
    </location>
</feature>
<feature type="modified residue" description="Phosphoserine" evidence="6 7">
    <location>
        <position position="353"/>
    </location>
</feature>
<feature type="glycosylation site" description="N-linked (GlcNAc...) asparagine" evidence="3">
    <location>
        <position position="107"/>
    </location>
</feature>
<feature type="glycosylation site" description="N-linked (GlcNAc...) asparagine" evidence="3">
    <location>
        <position position="197"/>
    </location>
</feature>
<feature type="disulfide bond" evidence="4">
    <location>
        <begin position="122"/>
        <end position="185"/>
    </location>
</feature>
<feature type="disulfide bond" evidence="4">
    <location>
        <begin position="224"/>
        <end position="280"/>
    </location>
</feature>
<proteinExistence type="evidence at protein level"/>
<reference key="1">
    <citation type="journal article" date="1985" name="Immunogenetics">
        <title>An H-2K gene of the tw32 mutant at the T/t complex is a close parent of an H-2Kq gene.</title>
        <authorList>
            <person name="Morita T."/>
            <person name="Delarbre C."/>
            <person name="Kress M."/>
            <person name="Kourilsky P."/>
            <person name="Gachelin G."/>
        </authorList>
    </citation>
    <scope>NUCLEOTIDE SEQUENCE [GENOMIC DNA]</scope>
</reference>
<reference key="2">
    <citation type="journal article" date="1983" name="Nature">
        <title>Alternative RNA splicing in expression of the H-2K gene.</title>
        <authorList>
            <person name="Kress M."/>
            <person name="Glaros D."/>
            <person name="Khoury G."/>
            <person name="Jay G."/>
        </authorList>
    </citation>
    <scope>NUCLEOTIDE SEQUENCE [MRNA] OF 258-368</scope>
    <source>
        <strain>SWR</strain>
    </source>
</reference>
<reference key="3">
    <citation type="journal article" date="2007" name="Proc. Natl. Acad. Sci. U.S.A.">
        <title>Large-scale phosphorylation analysis of mouse liver.</title>
        <authorList>
            <person name="Villen J."/>
            <person name="Beausoleil S.A."/>
            <person name="Gerber S.A."/>
            <person name="Gygi S.P."/>
        </authorList>
    </citation>
    <scope>PHOSPHORYLATION [LARGE SCALE ANALYSIS] AT SER-353</scope>
    <scope>IDENTIFICATION BY MASS SPECTROMETRY [LARGE SCALE ANALYSIS]</scope>
    <source>
        <tissue>Liver</tissue>
    </source>
</reference>
<reference key="4">
    <citation type="journal article" date="2010" name="Cell">
        <title>A tissue-specific atlas of mouse protein phosphorylation and expression.</title>
        <authorList>
            <person name="Huttlin E.L."/>
            <person name="Jedrychowski M.P."/>
            <person name="Elias J.E."/>
            <person name="Goswami T."/>
            <person name="Rad R."/>
            <person name="Beausoleil S.A."/>
            <person name="Villen J."/>
            <person name="Haas W."/>
            <person name="Sowa M.E."/>
            <person name="Gygi S.P."/>
        </authorList>
    </citation>
    <scope>PHOSPHORYLATION [LARGE SCALE ANALYSIS] AT SER-353</scope>
    <scope>IDENTIFICATION BY MASS SPECTROMETRY [LARGE SCALE ANALYSIS]</scope>
    <source>
        <tissue>Brown adipose tissue</tissue>
        <tissue>Kidney</tissue>
        <tissue>Lung</tissue>
        <tissue>Pancreas</tissue>
        <tissue>Spleen</tissue>
    </source>
</reference>
<name>HA1W_MOUSE</name>
<keyword id="KW-1015">Disulfide bond</keyword>
<keyword id="KW-0325">Glycoprotein</keyword>
<keyword id="KW-0391">Immunity</keyword>
<keyword id="KW-0472">Membrane</keyword>
<keyword id="KW-0490">MHC I</keyword>
<keyword id="KW-0597">Phosphoprotein</keyword>
<keyword id="KW-1185">Reference proteome</keyword>
<keyword id="KW-0732">Signal</keyword>
<keyword id="KW-0812">Transmembrane</keyword>
<keyword id="KW-1133">Transmembrane helix</keyword>
<organism>
    <name type="scientific">Mus musculus</name>
    <name type="common">Mouse</name>
    <dbReference type="NCBI Taxonomy" id="10090"/>
    <lineage>
        <taxon>Eukaryota</taxon>
        <taxon>Metazoa</taxon>
        <taxon>Chordata</taxon>
        <taxon>Craniata</taxon>
        <taxon>Vertebrata</taxon>
        <taxon>Euteleostomi</taxon>
        <taxon>Mammalia</taxon>
        <taxon>Eutheria</taxon>
        <taxon>Euarchontoglires</taxon>
        <taxon>Glires</taxon>
        <taxon>Rodentia</taxon>
        <taxon>Myomorpha</taxon>
        <taxon>Muroidea</taxon>
        <taxon>Muridae</taxon>
        <taxon>Murinae</taxon>
        <taxon>Mus</taxon>
        <taxon>Mus</taxon>
    </lineage>
</organism>
<comment type="function">
    <text>Involved in the presentation of foreign antigens to the immune system.</text>
</comment>
<comment type="subunit">
    <text>Heterodimer of an alpha chain and a beta chain (beta-2-microglobulin).</text>
</comment>
<comment type="subcellular location">
    <subcellularLocation>
        <location>Membrane</location>
        <topology>Single-pass type I membrane protein</topology>
    </subcellularLocation>
</comment>
<comment type="similarity">
    <text evidence="5">Belongs to the MHC class I family.</text>
</comment>
<evidence type="ECO:0000250" key="1"/>
<evidence type="ECO:0000250" key="2">
    <source>
        <dbReference type="UniProtKB" id="P01900"/>
    </source>
</evidence>
<evidence type="ECO:0000255" key="3"/>
<evidence type="ECO:0000255" key="4">
    <source>
        <dbReference type="PROSITE-ProRule" id="PRU00114"/>
    </source>
</evidence>
<evidence type="ECO:0000305" key="5"/>
<evidence type="ECO:0007744" key="6">
    <source>
    </source>
</evidence>
<evidence type="ECO:0007744" key="7">
    <source>
    </source>
</evidence>
<dbReference type="EMBL" id="M14825">
    <property type="protein sequence ID" value="AAA39657.1"/>
    <property type="molecule type" value="Genomic_DNA"/>
</dbReference>
<dbReference type="EMBL" id="X00172">
    <property type="protein sequence ID" value="CAA24997.1"/>
    <property type="molecule type" value="mRNA"/>
</dbReference>
<dbReference type="PIR" id="A02197">
    <property type="entry name" value="A02197"/>
</dbReference>
<dbReference type="PIR" id="I68705">
    <property type="entry name" value="I68705"/>
</dbReference>
<dbReference type="SMR" id="P03991"/>
<dbReference type="GlyCosmos" id="P03991">
    <property type="glycosylation" value="2 sites, No reported glycans"/>
</dbReference>
<dbReference type="iPTMnet" id="P03991"/>
<dbReference type="PhosphoSitePlus" id="P03991"/>
<dbReference type="jPOST" id="P03991"/>
<dbReference type="PeptideAtlas" id="P03991"/>
<dbReference type="ProteomicsDB" id="269802"/>
<dbReference type="Pumba" id="P03991"/>
<dbReference type="AGR" id="MGI:95904"/>
<dbReference type="MGI" id="MGI:95904">
    <property type="gene designation" value="H2-K1"/>
</dbReference>
<dbReference type="ChiTaRS" id="H2-K1">
    <property type="organism name" value="mouse"/>
</dbReference>
<dbReference type="Proteomes" id="UP000000589">
    <property type="component" value="Unplaced"/>
</dbReference>
<dbReference type="GO" id="GO:0009897">
    <property type="term" value="C:external side of plasma membrane"/>
    <property type="evidence" value="ECO:0000314"/>
    <property type="project" value="MGI"/>
</dbReference>
<dbReference type="GO" id="GO:0098553">
    <property type="term" value="C:lumenal side of endoplasmic reticulum membrane"/>
    <property type="evidence" value="ECO:0000304"/>
    <property type="project" value="Reactome"/>
</dbReference>
<dbReference type="GO" id="GO:0042612">
    <property type="term" value="C:MHC class I protein complex"/>
    <property type="evidence" value="ECO:0007669"/>
    <property type="project" value="UniProtKB-KW"/>
</dbReference>
<dbReference type="GO" id="GO:0030670">
    <property type="term" value="C:phagocytic vesicle membrane"/>
    <property type="evidence" value="ECO:0000304"/>
    <property type="project" value="Reactome"/>
</dbReference>
<dbReference type="GO" id="GO:0042605">
    <property type="term" value="F:peptide antigen binding"/>
    <property type="evidence" value="ECO:0000314"/>
    <property type="project" value="MGI"/>
</dbReference>
<dbReference type="GO" id="GO:0002485">
    <property type="term" value="P:antigen processing and presentation of endogenous peptide antigen via MHC class I via ER pathway, TAP-dependent"/>
    <property type="evidence" value="ECO:0000314"/>
    <property type="project" value="MGI"/>
</dbReference>
<dbReference type="GO" id="GO:0042590">
    <property type="term" value="P:antigen processing and presentation of exogenous peptide antigen via MHC class I"/>
    <property type="evidence" value="ECO:0000314"/>
    <property type="project" value="MGI"/>
</dbReference>
<dbReference type="GO" id="GO:0042742">
    <property type="term" value="P:defense response to bacterium"/>
    <property type="evidence" value="ECO:0000314"/>
    <property type="project" value="MGI"/>
</dbReference>
<dbReference type="GO" id="GO:0048839">
    <property type="term" value="P:inner ear development"/>
    <property type="evidence" value="ECO:0000314"/>
    <property type="project" value="MGI"/>
</dbReference>
<dbReference type="GO" id="GO:0010977">
    <property type="term" value="P:negative regulation of neuron projection development"/>
    <property type="evidence" value="ECO:0000314"/>
    <property type="project" value="MGI"/>
</dbReference>
<dbReference type="GO" id="GO:0001916">
    <property type="term" value="P:positive regulation of T cell mediated cytotoxicity"/>
    <property type="evidence" value="ECO:0000314"/>
    <property type="project" value="MGI"/>
</dbReference>
<dbReference type="GO" id="GO:0001913">
    <property type="term" value="P:T cell mediated cytotoxicity"/>
    <property type="evidence" value="ECO:0000314"/>
    <property type="project" value="MGI"/>
</dbReference>
<dbReference type="CDD" id="cd21019">
    <property type="entry name" value="IgC1_MHC_Ia_H-2Kb"/>
    <property type="match status" value="1"/>
</dbReference>
<dbReference type="FunFam" id="2.60.40.10:FF:000014">
    <property type="entry name" value="H-2 class I histocompatibility antigen, alpha chain"/>
    <property type="match status" value="1"/>
</dbReference>
<dbReference type="FunFam" id="3.30.500.10:FF:000001">
    <property type="entry name" value="H-2 class I histocompatibility antigen, alpha chain"/>
    <property type="match status" value="1"/>
</dbReference>
<dbReference type="Gene3D" id="2.60.40.10">
    <property type="entry name" value="Immunoglobulins"/>
    <property type="match status" value="1"/>
</dbReference>
<dbReference type="Gene3D" id="3.30.500.10">
    <property type="entry name" value="MHC class I-like antigen recognition-like"/>
    <property type="match status" value="1"/>
</dbReference>
<dbReference type="InterPro" id="IPR007110">
    <property type="entry name" value="Ig-like_dom"/>
</dbReference>
<dbReference type="InterPro" id="IPR036179">
    <property type="entry name" value="Ig-like_dom_sf"/>
</dbReference>
<dbReference type="InterPro" id="IPR013783">
    <property type="entry name" value="Ig-like_fold"/>
</dbReference>
<dbReference type="InterPro" id="IPR003006">
    <property type="entry name" value="Ig/MHC_CS"/>
</dbReference>
<dbReference type="InterPro" id="IPR003597">
    <property type="entry name" value="Ig_C1-set"/>
</dbReference>
<dbReference type="InterPro" id="IPR050208">
    <property type="entry name" value="MHC_class-I_related"/>
</dbReference>
<dbReference type="InterPro" id="IPR011161">
    <property type="entry name" value="MHC_I-like_Ag-recog"/>
</dbReference>
<dbReference type="InterPro" id="IPR037055">
    <property type="entry name" value="MHC_I-like_Ag-recog_sf"/>
</dbReference>
<dbReference type="InterPro" id="IPR011162">
    <property type="entry name" value="MHC_I/II-like_Ag-recog"/>
</dbReference>
<dbReference type="InterPro" id="IPR001039">
    <property type="entry name" value="MHC_I_a_a1/a2"/>
</dbReference>
<dbReference type="InterPro" id="IPR010579">
    <property type="entry name" value="MHC_I_a_C"/>
</dbReference>
<dbReference type="PANTHER" id="PTHR16675:SF251">
    <property type="entry name" value="HLA CLASS I HISTOCOMPATIBILITY ANTIGEN, C ALPHA CHAIN"/>
    <property type="match status" value="1"/>
</dbReference>
<dbReference type="PANTHER" id="PTHR16675">
    <property type="entry name" value="MHC CLASS I-RELATED"/>
    <property type="match status" value="1"/>
</dbReference>
<dbReference type="Pfam" id="PF07654">
    <property type="entry name" value="C1-set"/>
    <property type="match status" value="1"/>
</dbReference>
<dbReference type="Pfam" id="PF00129">
    <property type="entry name" value="MHC_I"/>
    <property type="match status" value="1"/>
</dbReference>
<dbReference type="Pfam" id="PF06623">
    <property type="entry name" value="MHC_I_C"/>
    <property type="match status" value="1"/>
</dbReference>
<dbReference type="PRINTS" id="PR01638">
    <property type="entry name" value="MHCCLASSI"/>
</dbReference>
<dbReference type="SMART" id="SM00407">
    <property type="entry name" value="IGc1"/>
    <property type="match status" value="1"/>
</dbReference>
<dbReference type="SUPFAM" id="SSF48726">
    <property type="entry name" value="Immunoglobulin"/>
    <property type="match status" value="1"/>
</dbReference>
<dbReference type="SUPFAM" id="SSF54452">
    <property type="entry name" value="MHC antigen-recognition domain"/>
    <property type="match status" value="1"/>
</dbReference>
<dbReference type="PROSITE" id="PS50835">
    <property type="entry name" value="IG_LIKE"/>
    <property type="match status" value="1"/>
</dbReference>
<dbReference type="PROSITE" id="PS00290">
    <property type="entry name" value="IG_MHC"/>
    <property type="match status" value="1"/>
</dbReference>
<sequence>MAPCMLLLLLAAALAPTQTRAGPHSLRYFHTAVSRPGLGKPRFISVGYVDDTEFVRFDSDAENPRYEPRARWMEQVEPEYWERNTQIAKDNEQSSRVDLRTLLRYYNQSAGGSHTIQRMYGCDVGSDGRLLRGYEQVAYDGCDYIALNEDLKTWTAADMAALITKHKWEQAGAAERRRAYLEGACVEWLSRHLKNGNATLLRTDSPKAHVTHHSRPEDKVTLRCWALGFYPADITLTWQLNGEELTQDMELVETRPAGDGTFQKWASVVVPLGKEQYYTCHVYHQGLPKPLTLRWEPPPSAVSNTVIIAVLVVLGAAIVTGAVVAFVMMRRRNTGGKGGDYALAPGSQTSDLSLPDCKVMVHDPHSLA</sequence>
<gene>
    <name type="primary">H2-K1</name>
    <name type="synonym">H2-K</name>
</gene>